<sequence length="328" mass="37219">MSLIKIDQKAYEYNLRHIAKKIGSFQRLICVFKDNAYGHGAKLLAPLAKNLGVSFVAVKSEEEAQEIEEFFENILILSHRPHGNENSRFIYALNDISQAKKYKQDIKIHLKIDTGMHRNGICVENLEHAIDLIQSSDLKLTGMFTHFASADEMDGSFFVQKENFQKAKKIVKKYFSNLLFHSHNSAALFRGKIPEDEYCRVGLVQFGYGDSNLKRVLSLYAHRLSQRILQKGQSIGYGGIFTAAKDMEVATYDLGYADGLFRYNGKGELVLGNGKVMLGKMSMDSFSCENSGEEICVFKDADIWADFFHTINYEILVKLNPNIQRVLV</sequence>
<evidence type="ECO:0000255" key="1">
    <source>
        <dbReference type="HAMAP-Rule" id="MF_01201"/>
    </source>
</evidence>
<feature type="chain" id="PRO_1000138589" description="Alanine racemase">
    <location>
        <begin position="1"/>
        <end position="328"/>
    </location>
</feature>
<feature type="active site" description="Proton acceptor; specific for D-alanine" evidence="1">
    <location>
        <position position="33"/>
    </location>
</feature>
<feature type="active site" description="Proton acceptor; specific for L-alanine" evidence="1">
    <location>
        <position position="237"/>
    </location>
</feature>
<feature type="binding site" evidence="1">
    <location>
        <position position="118"/>
    </location>
    <ligand>
        <name>substrate</name>
    </ligand>
</feature>
<feature type="binding site" evidence="1">
    <location>
        <position position="283"/>
    </location>
    <ligand>
        <name>substrate</name>
    </ligand>
</feature>
<feature type="modified residue" description="N6-(pyridoxal phosphate)lysine" evidence="1">
    <location>
        <position position="33"/>
    </location>
</feature>
<dbReference type="EC" id="5.1.1.1" evidence="1"/>
<dbReference type="EMBL" id="CP000025">
    <property type="protein sequence ID" value="AAW35317.1"/>
    <property type="molecule type" value="Genomic_DNA"/>
</dbReference>
<dbReference type="RefSeq" id="WP_002867456.1">
    <property type="nucleotide sequence ID" value="NC_003912.7"/>
</dbReference>
<dbReference type="SMR" id="Q5HUQ3"/>
<dbReference type="KEGG" id="cjr:CJE0984"/>
<dbReference type="HOGENOM" id="CLU_028393_2_2_7"/>
<dbReference type="UniPathway" id="UPA00042">
    <property type="reaction ID" value="UER00497"/>
</dbReference>
<dbReference type="GO" id="GO:0005829">
    <property type="term" value="C:cytosol"/>
    <property type="evidence" value="ECO:0007669"/>
    <property type="project" value="TreeGrafter"/>
</dbReference>
<dbReference type="GO" id="GO:0008784">
    <property type="term" value="F:alanine racemase activity"/>
    <property type="evidence" value="ECO:0007669"/>
    <property type="project" value="UniProtKB-UniRule"/>
</dbReference>
<dbReference type="GO" id="GO:0030170">
    <property type="term" value="F:pyridoxal phosphate binding"/>
    <property type="evidence" value="ECO:0007669"/>
    <property type="project" value="UniProtKB-UniRule"/>
</dbReference>
<dbReference type="GO" id="GO:0030632">
    <property type="term" value="P:D-alanine biosynthetic process"/>
    <property type="evidence" value="ECO:0007669"/>
    <property type="project" value="UniProtKB-UniRule"/>
</dbReference>
<dbReference type="GO" id="GO:0009252">
    <property type="term" value="P:peptidoglycan biosynthetic process"/>
    <property type="evidence" value="ECO:0007669"/>
    <property type="project" value="TreeGrafter"/>
</dbReference>
<dbReference type="Gene3D" id="3.20.20.10">
    <property type="entry name" value="Alanine racemase"/>
    <property type="match status" value="1"/>
</dbReference>
<dbReference type="Gene3D" id="2.40.37.10">
    <property type="entry name" value="Lyase, Ornithine Decarboxylase, Chain A, domain 1"/>
    <property type="match status" value="1"/>
</dbReference>
<dbReference type="HAMAP" id="MF_01201">
    <property type="entry name" value="Ala_racemase"/>
    <property type="match status" value="1"/>
</dbReference>
<dbReference type="InterPro" id="IPR000821">
    <property type="entry name" value="Ala_racemase"/>
</dbReference>
<dbReference type="InterPro" id="IPR009006">
    <property type="entry name" value="Ala_racemase/Decarboxylase_C"/>
</dbReference>
<dbReference type="InterPro" id="IPR011079">
    <property type="entry name" value="Ala_racemase_C"/>
</dbReference>
<dbReference type="InterPro" id="IPR001608">
    <property type="entry name" value="Ala_racemase_N"/>
</dbReference>
<dbReference type="InterPro" id="IPR020622">
    <property type="entry name" value="Ala_racemase_pyridoxalP-BS"/>
</dbReference>
<dbReference type="InterPro" id="IPR029066">
    <property type="entry name" value="PLP-binding_barrel"/>
</dbReference>
<dbReference type="NCBIfam" id="TIGR00492">
    <property type="entry name" value="alr"/>
    <property type="match status" value="1"/>
</dbReference>
<dbReference type="NCBIfam" id="NF000791">
    <property type="entry name" value="PRK00053.2-2"/>
    <property type="match status" value="1"/>
</dbReference>
<dbReference type="PANTHER" id="PTHR30511">
    <property type="entry name" value="ALANINE RACEMASE"/>
    <property type="match status" value="1"/>
</dbReference>
<dbReference type="PANTHER" id="PTHR30511:SF0">
    <property type="entry name" value="ALANINE RACEMASE, CATABOLIC-RELATED"/>
    <property type="match status" value="1"/>
</dbReference>
<dbReference type="Pfam" id="PF00842">
    <property type="entry name" value="Ala_racemase_C"/>
    <property type="match status" value="1"/>
</dbReference>
<dbReference type="Pfam" id="PF01168">
    <property type="entry name" value="Ala_racemase_N"/>
    <property type="match status" value="1"/>
</dbReference>
<dbReference type="PRINTS" id="PR00992">
    <property type="entry name" value="ALARACEMASE"/>
</dbReference>
<dbReference type="SMART" id="SM01005">
    <property type="entry name" value="Ala_racemase_C"/>
    <property type="match status" value="1"/>
</dbReference>
<dbReference type="SUPFAM" id="SSF50621">
    <property type="entry name" value="Alanine racemase C-terminal domain-like"/>
    <property type="match status" value="1"/>
</dbReference>
<dbReference type="SUPFAM" id="SSF51419">
    <property type="entry name" value="PLP-binding barrel"/>
    <property type="match status" value="1"/>
</dbReference>
<dbReference type="PROSITE" id="PS00395">
    <property type="entry name" value="ALANINE_RACEMASE"/>
    <property type="match status" value="1"/>
</dbReference>
<comment type="function">
    <text evidence="1">Catalyzes the interconversion of L-alanine and D-alanine. May also act on other amino acids.</text>
</comment>
<comment type="catalytic activity">
    <reaction evidence="1">
        <text>L-alanine = D-alanine</text>
        <dbReference type="Rhea" id="RHEA:20249"/>
        <dbReference type="ChEBI" id="CHEBI:57416"/>
        <dbReference type="ChEBI" id="CHEBI:57972"/>
        <dbReference type="EC" id="5.1.1.1"/>
    </reaction>
</comment>
<comment type="cofactor">
    <cofactor evidence="1">
        <name>pyridoxal 5'-phosphate</name>
        <dbReference type="ChEBI" id="CHEBI:597326"/>
    </cofactor>
</comment>
<comment type="pathway">
    <text evidence="1">Amino-acid biosynthesis; D-alanine biosynthesis; D-alanine from L-alanine: step 1/1.</text>
</comment>
<comment type="similarity">
    <text evidence="1">Belongs to the alanine racemase family.</text>
</comment>
<organism>
    <name type="scientific">Campylobacter jejuni (strain RM1221)</name>
    <dbReference type="NCBI Taxonomy" id="195099"/>
    <lineage>
        <taxon>Bacteria</taxon>
        <taxon>Pseudomonadati</taxon>
        <taxon>Campylobacterota</taxon>
        <taxon>Epsilonproteobacteria</taxon>
        <taxon>Campylobacterales</taxon>
        <taxon>Campylobacteraceae</taxon>
        <taxon>Campylobacter</taxon>
    </lineage>
</organism>
<gene>
    <name type="primary">alr</name>
    <name type="ordered locus">CJE0984</name>
</gene>
<keyword id="KW-0413">Isomerase</keyword>
<keyword id="KW-0663">Pyridoxal phosphate</keyword>
<accession>Q5HUQ3</accession>
<proteinExistence type="inferred from homology"/>
<protein>
    <recommendedName>
        <fullName evidence="1">Alanine racemase</fullName>
        <ecNumber evidence="1">5.1.1.1</ecNumber>
    </recommendedName>
</protein>
<name>ALR_CAMJR</name>
<reference key="1">
    <citation type="journal article" date="2005" name="PLoS Biol.">
        <title>Major structural differences and novel potential virulence mechanisms from the genomes of multiple Campylobacter species.</title>
        <authorList>
            <person name="Fouts D.E."/>
            <person name="Mongodin E.F."/>
            <person name="Mandrell R.E."/>
            <person name="Miller W.G."/>
            <person name="Rasko D.A."/>
            <person name="Ravel J."/>
            <person name="Brinkac L.M."/>
            <person name="DeBoy R.T."/>
            <person name="Parker C.T."/>
            <person name="Daugherty S.C."/>
            <person name="Dodson R.J."/>
            <person name="Durkin A.S."/>
            <person name="Madupu R."/>
            <person name="Sullivan S.A."/>
            <person name="Shetty J.U."/>
            <person name="Ayodeji M.A."/>
            <person name="Shvartsbeyn A."/>
            <person name="Schatz M.C."/>
            <person name="Badger J.H."/>
            <person name="Fraser C.M."/>
            <person name="Nelson K.E."/>
        </authorList>
    </citation>
    <scope>NUCLEOTIDE SEQUENCE [LARGE SCALE GENOMIC DNA]</scope>
    <source>
        <strain>RM1221</strain>
    </source>
</reference>